<keyword id="KW-1185">Reference proteome</keyword>
<keyword id="KW-0687">Ribonucleoprotein</keyword>
<keyword id="KW-0689">Ribosomal protein</keyword>
<keyword id="KW-0694">RNA-binding</keyword>
<keyword id="KW-0699">rRNA-binding</keyword>
<protein>
    <recommendedName>
        <fullName evidence="1">Large ribosomal subunit protein bL25</fullName>
    </recommendedName>
    <alternativeName>
        <fullName evidence="3">50S ribosomal protein L25</fullName>
    </alternativeName>
    <alternativeName>
        <fullName evidence="1">General stress protein CTC</fullName>
    </alternativeName>
</protein>
<feature type="chain" id="PRO_0000244237" description="Large ribosomal subunit protein bL25">
    <location>
        <begin position="1"/>
        <end position="240"/>
    </location>
</feature>
<feature type="region of interest" description="Disordered" evidence="2">
    <location>
        <begin position="1"/>
        <end position="24"/>
    </location>
</feature>
<comment type="function">
    <text evidence="1">This is one of the proteins that binds to the 5S RNA in the ribosome where it forms part of the central protuberance.</text>
</comment>
<comment type="subunit">
    <text evidence="1">Part of the 50S ribosomal subunit; part of the 5S rRNA/L5/L18/L25 subcomplex. Contacts the 5S rRNA. Binds to the 5S rRNA independently of L5 and L18.</text>
</comment>
<comment type="similarity">
    <text evidence="1">Belongs to the bacterial ribosomal protein bL25 family. CTC subfamily.</text>
</comment>
<organism>
    <name type="scientific">Rhodopseudomonas palustris (strain HaA2)</name>
    <dbReference type="NCBI Taxonomy" id="316058"/>
    <lineage>
        <taxon>Bacteria</taxon>
        <taxon>Pseudomonadati</taxon>
        <taxon>Pseudomonadota</taxon>
        <taxon>Alphaproteobacteria</taxon>
        <taxon>Hyphomicrobiales</taxon>
        <taxon>Nitrobacteraceae</taxon>
        <taxon>Rhodopseudomonas</taxon>
    </lineage>
</organism>
<dbReference type="EMBL" id="CP000250">
    <property type="protein sequence ID" value="ABD08853.1"/>
    <property type="molecule type" value="Genomic_DNA"/>
</dbReference>
<dbReference type="RefSeq" id="WP_011443037.1">
    <property type="nucleotide sequence ID" value="NC_007778.1"/>
</dbReference>
<dbReference type="SMR" id="Q2ISF7"/>
<dbReference type="STRING" id="316058.RPB_4161"/>
<dbReference type="KEGG" id="rpb:RPB_4161"/>
<dbReference type="eggNOG" id="COG1825">
    <property type="taxonomic scope" value="Bacteria"/>
</dbReference>
<dbReference type="HOGENOM" id="CLU_075939_0_0_5"/>
<dbReference type="OrthoDB" id="9806411at2"/>
<dbReference type="Proteomes" id="UP000008809">
    <property type="component" value="Chromosome"/>
</dbReference>
<dbReference type="GO" id="GO:0022625">
    <property type="term" value="C:cytosolic large ribosomal subunit"/>
    <property type="evidence" value="ECO:0007669"/>
    <property type="project" value="TreeGrafter"/>
</dbReference>
<dbReference type="GO" id="GO:0008097">
    <property type="term" value="F:5S rRNA binding"/>
    <property type="evidence" value="ECO:0007669"/>
    <property type="project" value="InterPro"/>
</dbReference>
<dbReference type="GO" id="GO:0003735">
    <property type="term" value="F:structural constituent of ribosome"/>
    <property type="evidence" value="ECO:0007669"/>
    <property type="project" value="InterPro"/>
</dbReference>
<dbReference type="GO" id="GO:0006412">
    <property type="term" value="P:translation"/>
    <property type="evidence" value="ECO:0007669"/>
    <property type="project" value="UniProtKB-UniRule"/>
</dbReference>
<dbReference type="CDD" id="cd00495">
    <property type="entry name" value="Ribosomal_L25_TL5_CTC"/>
    <property type="match status" value="1"/>
</dbReference>
<dbReference type="Gene3D" id="2.170.120.20">
    <property type="entry name" value="Ribosomal protein L25, beta domain"/>
    <property type="match status" value="1"/>
</dbReference>
<dbReference type="Gene3D" id="2.40.240.10">
    <property type="entry name" value="Ribosomal Protein L25, Chain P"/>
    <property type="match status" value="1"/>
</dbReference>
<dbReference type="HAMAP" id="MF_01334">
    <property type="entry name" value="Ribosomal_bL25_CTC"/>
    <property type="match status" value="1"/>
</dbReference>
<dbReference type="InterPro" id="IPR020056">
    <property type="entry name" value="Rbsml_bL25/Gln-tRNA_synth_N"/>
</dbReference>
<dbReference type="InterPro" id="IPR011035">
    <property type="entry name" value="Ribosomal_bL25/Gln-tRNA_synth"/>
</dbReference>
<dbReference type="InterPro" id="IPR020057">
    <property type="entry name" value="Ribosomal_bL25_b-dom"/>
</dbReference>
<dbReference type="InterPro" id="IPR037121">
    <property type="entry name" value="Ribosomal_bL25_C"/>
</dbReference>
<dbReference type="InterPro" id="IPR001021">
    <property type="entry name" value="Ribosomal_bL25_long"/>
</dbReference>
<dbReference type="InterPro" id="IPR029751">
    <property type="entry name" value="Ribosomal_L25_dom"/>
</dbReference>
<dbReference type="InterPro" id="IPR020930">
    <property type="entry name" value="Ribosomal_uL5_bac-type"/>
</dbReference>
<dbReference type="NCBIfam" id="TIGR00731">
    <property type="entry name" value="bL25_bact_ctc"/>
    <property type="match status" value="1"/>
</dbReference>
<dbReference type="NCBIfam" id="NF004128">
    <property type="entry name" value="PRK05618.1-2"/>
    <property type="match status" value="1"/>
</dbReference>
<dbReference type="PANTHER" id="PTHR33284">
    <property type="entry name" value="RIBOSOMAL PROTEIN L25/GLN-TRNA SYNTHETASE, ANTI-CODON-BINDING DOMAIN-CONTAINING PROTEIN"/>
    <property type="match status" value="1"/>
</dbReference>
<dbReference type="PANTHER" id="PTHR33284:SF1">
    <property type="entry name" value="RIBOSOMAL PROTEIN L25_GLN-TRNA SYNTHETASE, ANTI-CODON-BINDING DOMAIN-CONTAINING PROTEIN"/>
    <property type="match status" value="1"/>
</dbReference>
<dbReference type="Pfam" id="PF01386">
    <property type="entry name" value="Ribosomal_L25p"/>
    <property type="match status" value="1"/>
</dbReference>
<dbReference type="Pfam" id="PF14693">
    <property type="entry name" value="Ribosomal_TL5_C"/>
    <property type="match status" value="1"/>
</dbReference>
<dbReference type="SUPFAM" id="SSF50715">
    <property type="entry name" value="Ribosomal protein L25-like"/>
    <property type="match status" value="1"/>
</dbReference>
<proteinExistence type="inferred from homology"/>
<accession>Q2ISF7</accession>
<gene>
    <name evidence="1" type="primary">rplY</name>
    <name evidence="1" type="synonym">ctc</name>
    <name type="ordered locus">RPB_4161</name>
</gene>
<evidence type="ECO:0000255" key="1">
    <source>
        <dbReference type="HAMAP-Rule" id="MF_01334"/>
    </source>
</evidence>
<evidence type="ECO:0000256" key="2">
    <source>
        <dbReference type="SAM" id="MobiDB-lite"/>
    </source>
</evidence>
<evidence type="ECO:0000305" key="3"/>
<name>RL25_RHOP2</name>
<reference key="1">
    <citation type="submission" date="2006-01" db="EMBL/GenBank/DDBJ databases">
        <title>Complete sequence of Rhodopseudomonas palustris HaA2.</title>
        <authorList>
            <consortium name="US DOE Joint Genome Institute"/>
            <person name="Copeland A."/>
            <person name="Lucas S."/>
            <person name="Lapidus A."/>
            <person name="Barry K."/>
            <person name="Detter J.C."/>
            <person name="Glavina T."/>
            <person name="Hammon N."/>
            <person name="Israni S."/>
            <person name="Pitluck S."/>
            <person name="Chain P."/>
            <person name="Malfatti S."/>
            <person name="Shin M."/>
            <person name="Vergez L."/>
            <person name="Schmutz J."/>
            <person name="Larimer F."/>
            <person name="Land M."/>
            <person name="Hauser L."/>
            <person name="Pelletier D.A."/>
            <person name="Kyrpides N."/>
            <person name="Anderson I."/>
            <person name="Oda Y."/>
            <person name="Harwood C.S."/>
            <person name="Richardson P."/>
        </authorList>
    </citation>
    <scope>NUCLEOTIDE SEQUENCE [LARGE SCALE GENOMIC DNA]</scope>
    <source>
        <strain>HaA2</strain>
    </source>
</reference>
<sequence>MATVMEFKATARPKSGKGAARAERRAGRVPGVIYGDNKPPLPISVEDKDLRLRIQAGRFLTTIFDVVLDGQKHRVIPRDYHLDPVKDFPVHVDFLRLGEGATIRISVPLHLKGLESAPGVKRGGTFNIVTHTVDLEAPADAIPQFIEADVSTLDIGVSLHLSDIALPKGVKSVSREDVTLVTIVPPSGFNEEAAAPGAAPAAAAAAPAAKAGAAKAPAAAAPAAKAGAAKAPAAPAAKKK</sequence>